<gene>
    <name type="primary">king-tubby2</name>
    <name type="ORF">AAEL013575</name>
</gene>
<keyword id="KW-0963">Cytoplasm</keyword>
<keyword id="KW-0539">Nucleus</keyword>
<keyword id="KW-1185">Reference proteome</keyword>
<name>TULP2_AEDAE</name>
<reference evidence="4" key="1">
    <citation type="journal article" date="2007" name="Science">
        <title>Genome sequence of Aedes aegypti, a major arbovirus vector.</title>
        <authorList>
            <person name="Nene V."/>
            <person name="Wortman J.R."/>
            <person name="Lawson D."/>
            <person name="Haas B.J."/>
            <person name="Kodira C.D."/>
            <person name="Tu Z.J."/>
            <person name="Loftus B.J."/>
            <person name="Xi Z."/>
            <person name="Megy K."/>
            <person name="Grabherr M."/>
            <person name="Ren Q."/>
            <person name="Zdobnov E.M."/>
            <person name="Lobo N.F."/>
            <person name="Campbell K.S."/>
            <person name="Brown S.E."/>
            <person name="Bonaldo M.F."/>
            <person name="Zhu J."/>
            <person name="Sinkins S.P."/>
            <person name="Hogenkamp D.G."/>
            <person name="Amedeo P."/>
            <person name="Arensburger P."/>
            <person name="Atkinson P.W."/>
            <person name="Bidwell S.L."/>
            <person name="Biedler J."/>
            <person name="Birney E."/>
            <person name="Bruggner R.V."/>
            <person name="Costas J."/>
            <person name="Coy M.R."/>
            <person name="Crabtree J."/>
            <person name="Crawford M."/>
            <person name="DeBruyn B."/>
            <person name="DeCaprio D."/>
            <person name="Eiglmeier K."/>
            <person name="Eisenstadt E."/>
            <person name="El-Dorry H."/>
            <person name="Gelbart W.M."/>
            <person name="Gomes S.L."/>
            <person name="Hammond M."/>
            <person name="Hannick L.I."/>
            <person name="Hogan J.R."/>
            <person name="Holmes M.H."/>
            <person name="Jaffe D."/>
            <person name="Johnston S.J."/>
            <person name="Kennedy R.C."/>
            <person name="Koo H."/>
            <person name="Kravitz S."/>
            <person name="Kriventseva E.V."/>
            <person name="Kulp D."/>
            <person name="Labutti K."/>
            <person name="Lee E."/>
            <person name="Li S."/>
            <person name="Lovin D.D."/>
            <person name="Mao C."/>
            <person name="Mauceli E."/>
            <person name="Menck C.F."/>
            <person name="Miller J.R."/>
            <person name="Montgomery P."/>
            <person name="Mori A."/>
            <person name="Nascimento A.L."/>
            <person name="Naveira H.F."/>
            <person name="Nusbaum C."/>
            <person name="O'Leary S.B."/>
            <person name="Orvis J."/>
            <person name="Pertea M."/>
            <person name="Quesneville H."/>
            <person name="Reidenbach K.R."/>
            <person name="Rogers Y.-H.C."/>
            <person name="Roth C.W."/>
            <person name="Schneider J.R."/>
            <person name="Schatz M."/>
            <person name="Shumway M."/>
            <person name="Stanke M."/>
            <person name="Stinson E.O."/>
            <person name="Tubio J.M.C."/>
            <person name="Vanzee J.P."/>
            <person name="Verjovski-Almeida S."/>
            <person name="Werner D."/>
            <person name="White O.R."/>
            <person name="Wyder S."/>
            <person name="Zeng Q."/>
            <person name="Zhao Q."/>
            <person name="Zhao Y."/>
            <person name="Hill C.A."/>
            <person name="Raikhel A.S."/>
            <person name="Soares M.B."/>
            <person name="Knudson D.L."/>
            <person name="Lee N.H."/>
            <person name="Galagan J."/>
            <person name="Salzberg S.L."/>
            <person name="Paulsen I.T."/>
            <person name="Dimopoulos G."/>
            <person name="Collins F.H."/>
            <person name="Bruce B."/>
            <person name="Fraser-Liggett C.M."/>
            <person name="Severson D.W."/>
        </authorList>
    </citation>
    <scope>NUCLEOTIDE SEQUENCE [LARGE SCALE GENOMIC DNA]</scope>
    <source>
        <strain>LVPib12</strain>
    </source>
</reference>
<dbReference type="EMBL" id="CH478058">
    <property type="protein sequence ID" value="EAT34160.1"/>
    <property type="molecule type" value="Genomic_DNA"/>
</dbReference>
<dbReference type="RefSeq" id="XP_001663764.1">
    <property type="nucleotide sequence ID" value="XM_001663714.1"/>
</dbReference>
<dbReference type="SMR" id="Q16IR1"/>
<dbReference type="FunCoup" id="Q16IR1">
    <property type="interactions" value="193"/>
</dbReference>
<dbReference type="STRING" id="7159.Q16IR1"/>
<dbReference type="PaxDb" id="7159-AAEL013575-PA"/>
<dbReference type="VEuPathDB" id="VectorBase:AAEL013575"/>
<dbReference type="eggNOG" id="KOG2502">
    <property type="taxonomic scope" value="Eukaryota"/>
</dbReference>
<dbReference type="HOGENOM" id="CLU_028236_1_1_1"/>
<dbReference type="InParanoid" id="Q16IR1"/>
<dbReference type="OMA" id="HFKCRIT"/>
<dbReference type="PhylomeDB" id="Q16IR1"/>
<dbReference type="Proteomes" id="UP000008820">
    <property type="component" value="Chromosome 3"/>
</dbReference>
<dbReference type="Proteomes" id="UP000682892">
    <property type="component" value="Unassembled WGS sequence"/>
</dbReference>
<dbReference type="GO" id="GO:0005929">
    <property type="term" value="C:cilium"/>
    <property type="evidence" value="ECO:0007669"/>
    <property type="project" value="TreeGrafter"/>
</dbReference>
<dbReference type="GO" id="GO:0005737">
    <property type="term" value="C:cytoplasm"/>
    <property type="evidence" value="ECO:0000250"/>
    <property type="project" value="UniProtKB"/>
</dbReference>
<dbReference type="GO" id="GO:0005634">
    <property type="term" value="C:nucleus"/>
    <property type="evidence" value="ECO:0000250"/>
    <property type="project" value="UniProtKB"/>
</dbReference>
<dbReference type="GO" id="GO:0061512">
    <property type="term" value="P:protein localization to cilium"/>
    <property type="evidence" value="ECO:0007669"/>
    <property type="project" value="TreeGrafter"/>
</dbReference>
<dbReference type="FunFam" id="3.20.90.10:FF:000001">
    <property type="entry name" value="Tubby-like protein"/>
    <property type="match status" value="1"/>
</dbReference>
<dbReference type="Gene3D" id="3.20.90.10">
    <property type="entry name" value="Tubby Protein, Chain A"/>
    <property type="match status" value="1"/>
</dbReference>
<dbReference type="InterPro" id="IPR025659">
    <property type="entry name" value="Tubby-like_C"/>
</dbReference>
<dbReference type="InterPro" id="IPR000007">
    <property type="entry name" value="Tubby_C"/>
</dbReference>
<dbReference type="InterPro" id="IPR018066">
    <property type="entry name" value="Tubby_C_CS"/>
</dbReference>
<dbReference type="PANTHER" id="PTHR16517:SF7">
    <property type="entry name" value="PROTEIN KING TUBBY"/>
    <property type="match status" value="1"/>
</dbReference>
<dbReference type="PANTHER" id="PTHR16517">
    <property type="entry name" value="TUBBY-RELATED"/>
    <property type="match status" value="1"/>
</dbReference>
<dbReference type="Pfam" id="PF01167">
    <property type="entry name" value="Tub"/>
    <property type="match status" value="1"/>
</dbReference>
<dbReference type="PRINTS" id="PR01573">
    <property type="entry name" value="SUPERTUBBY"/>
</dbReference>
<dbReference type="SUPFAM" id="SSF54518">
    <property type="entry name" value="Tubby C-terminal domain-like"/>
    <property type="match status" value="1"/>
</dbReference>
<dbReference type="PROSITE" id="PS01200">
    <property type="entry name" value="TUB_1"/>
    <property type="match status" value="1"/>
</dbReference>
<dbReference type="PROSITE" id="PS01201">
    <property type="entry name" value="TUB_2"/>
    <property type="match status" value="1"/>
</dbReference>
<protein>
    <recommendedName>
        <fullName>Protein king tubby 2</fullName>
    </recommendedName>
</protein>
<proteinExistence type="inferred from homology"/>
<feature type="chain" id="PRO_0000400832" description="Protein king tubby 2">
    <location>
        <begin position="1"/>
        <end position="410"/>
    </location>
</feature>
<feature type="region of interest" description="Disordered" evidence="3">
    <location>
        <begin position="48"/>
        <end position="109"/>
    </location>
</feature>
<feature type="region of interest" description="Disordered" evidence="3">
    <location>
        <begin position="121"/>
        <end position="159"/>
    </location>
</feature>
<feature type="compositionally biased region" description="Polar residues" evidence="3">
    <location>
        <begin position="48"/>
        <end position="72"/>
    </location>
</feature>
<feature type="compositionally biased region" description="Basic and acidic residues" evidence="3">
    <location>
        <begin position="132"/>
        <end position="143"/>
    </location>
</feature>
<comment type="subcellular location">
    <subcellularLocation>
        <location evidence="1">Cytoplasm</location>
    </subcellularLocation>
    <subcellularLocation>
        <location evidence="1">Nucleus</location>
    </subcellularLocation>
</comment>
<comment type="similarity">
    <text evidence="2">Belongs to the TUB family.</text>
</comment>
<organism>
    <name type="scientific">Aedes aegypti</name>
    <name type="common">Yellowfever mosquito</name>
    <name type="synonym">Culex aegypti</name>
    <dbReference type="NCBI Taxonomy" id="7159"/>
    <lineage>
        <taxon>Eukaryota</taxon>
        <taxon>Metazoa</taxon>
        <taxon>Ecdysozoa</taxon>
        <taxon>Arthropoda</taxon>
        <taxon>Hexapoda</taxon>
        <taxon>Insecta</taxon>
        <taxon>Pterygota</taxon>
        <taxon>Neoptera</taxon>
        <taxon>Endopterygota</taxon>
        <taxon>Diptera</taxon>
        <taxon>Nematocera</taxon>
        <taxon>Culicoidea</taxon>
        <taxon>Culicidae</taxon>
        <taxon>Culicinae</taxon>
        <taxon>Aedini</taxon>
        <taxon>Aedes</taxon>
        <taxon>Stegomyia</taxon>
    </lineage>
</organism>
<sequence>MEAYIRQKRATPGMVQASDMQLVRPMSAVNRNGREVHAYDGPMQFMMSPNNPDQILTSTGNASITTTPTSPYSDAPLEKLTPSSQDSEDEESTPVDILPSSNSFDSTRHSADHLLTHSAPISPALMNNNGGSHHDSSSGKSVEHSSPQASGHNDTEGDVVGPIEQWVTQPAPQGVLYKCRITRDRKGMDRGLFPIYYLHLERDYGKKVFCLAGRKRKKSKTSNYIISCDPTDLSRQADGFVGKLRSNVFGTTFFVYDSGKKEDHGNPRLDLAVVIYDTNILGFKGPRNMTVLLPGMTEDDQRVKISSADGQQGLLDSWKSKNMDNVVELHNKTPIWNDETQSYVLNFHGRVTQASVKNFQLVHDSDPDYIVMQFGRTSDDIFTMDFRYPLCAFQAFAIALSSFDGKLACE</sequence>
<evidence type="ECO:0000250" key="1">
    <source>
        <dbReference type="UniProtKB" id="Q86PC9"/>
    </source>
</evidence>
<evidence type="ECO:0000255" key="2"/>
<evidence type="ECO:0000256" key="3">
    <source>
        <dbReference type="SAM" id="MobiDB-lite"/>
    </source>
</evidence>
<evidence type="ECO:0000312" key="4">
    <source>
        <dbReference type="EMBL" id="EAT34160.1"/>
    </source>
</evidence>
<accession>Q16IR1</accession>